<proteinExistence type="inferred from homology"/>
<name>Y1382_ALKEH</name>
<gene>
    <name type="ordered locus">Mlg_1382</name>
</gene>
<comment type="similarity">
    <text evidence="1">Belongs to the UPF0260 family.</text>
</comment>
<accession>Q0A8V6</accession>
<feature type="chain" id="PRO_1000044787" description="UPF0260 protein Mlg_1382">
    <location>
        <begin position="1"/>
        <end position="155"/>
    </location>
</feature>
<organism>
    <name type="scientific">Alkalilimnicola ehrlichii (strain ATCC BAA-1101 / DSM 17681 / MLHE-1)</name>
    <dbReference type="NCBI Taxonomy" id="187272"/>
    <lineage>
        <taxon>Bacteria</taxon>
        <taxon>Pseudomonadati</taxon>
        <taxon>Pseudomonadota</taxon>
        <taxon>Gammaproteobacteria</taxon>
        <taxon>Chromatiales</taxon>
        <taxon>Ectothiorhodospiraceae</taxon>
        <taxon>Alkalilimnicola</taxon>
    </lineage>
</organism>
<sequence>MTGAERPFWEHLPLEEMSQAQWEALCDGCGRCCLHSFEDEDTGAVIATPVACKLLDTQSCRCTRYPDRRQFVPDCTQLTPEGARSWKWLPETCAYRRLAEGRGLADWHPLVSGDPESVHRAGISVRGRVVSEQDPRAARQIHQVFARLHPGNNDK</sequence>
<dbReference type="EMBL" id="CP000453">
    <property type="protein sequence ID" value="ABI56731.1"/>
    <property type="molecule type" value="Genomic_DNA"/>
</dbReference>
<dbReference type="RefSeq" id="WP_011629126.1">
    <property type="nucleotide sequence ID" value="NC_008340.1"/>
</dbReference>
<dbReference type="KEGG" id="aeh:Mlg_1382"/>
<dbReference type="eggNOG" id="COG2983">
    <property type="taxonomic scope" value="Bacteria"/>
</dbReference>
<dbReference type="HOGENOM" id="CLU_109769_1_0_6"/>
<dbReference type="OrthoDB" id="9786855at2"/>
<dbReference type="Proteomes" id="UP000001962">
    <property type="component" value="Chromosome"/>
</dbReference>
<dbReference type="HAMAP" id="MF_00676">
    <property type="entry name" value="UPF0260"/>
    <property type="match status" value="1"/>
</dbReference>
<dbReference type="InterPro" id="IPR005358">
    <property type="entry name" value="Puta_zinc/iron-chelating_dom"/>
</dbReference>
<dbReference type="InterPro" id="IPR008228">
    <property type="entry name" value="UCP006173"/>
</dbReference>
<dbReference type="NCBIfam" id="NF003501">
    <property type="entry name" value="PRK05170.1-5"/>
    <property type="match status" value="1"/>
</dbReference>
<dbReference type="NCBIfam" id="NF003507">
    <property type="entry name" value="PRK05170.2-5"/>
    <property type="match status" value="1"/>
</dbReference>
<dbReference type="PANTHER" id="PTHR37421">
    <property type="entry name" value="UPF0260 PROTEIN YCGN"/>
    <property type="match status" value="1"/>
</dbReference>
<dbReference type="PANTHER" id="PTHR37421:SF1">
    <property type="entry name" value="UPF0260 PROTEIN YCGN"/>
    <property type="match status" value="1"/>
</dbReference>
<dbReference type="Pfam" id="PF03692">
    <property type="entry name" value="CxxCxxCC"/>
    <property type="match status" value="1"/>
</dbReference>
<dbReference type="PIRSF" id="PIRSF006173">
    <property type="entry name" value="UCP006173"/>
    <property type="match status" value="1"/>
</dbReference>
<reference key="1">
    <citation type="submission" date="2006-08" db="EMBL/GenBank/DDBJ databases">
        <title>Complete sequence of Alkalilimnicola ehrilichei MLHE-1.</title>
        <authorList>
            <person name="Copeland A."/>
            <person name="Lucas S."/>
            <person name="Lapidus A."/>
            <person name="Barry K."/>
            <person name="Detter J.C."/>
            <person name="Glavina del Rio T."/>
            <person name="Hammon N."/>
            <person name="Israni S."/>
            <person name="Dalin E."/>
            <person name="Tice H."/>
            <person name="Pitluck S."/>
            <person name="Sims D."/>
            <person name="Brettin T."/>
            <person name="Bruce D."/>
            <person name="Han C."/>
            <person name="Tapia R."/>
            <person name="Gilna P."/>
            <person name="Schmutz J."/>
            <person name="Larimer F."/>
            <person name="Land M."/>
            <person name="Hauser L."/>
            <person name="Kyrpides N."/>
            <person name="Mikhailova N."/>
            <person name="Oremland R.S."/>
            <person name="Hoeft S.E."/>
            <person name="Switzer-Blum J."/>
            <person name="Kulp T."/>
            <person name="King G."/>
            <person name="Tabita R."/>
            <person name="Witte B."/>
            <person name="Santini J.M."/>
            <person name="Basu P."/>
            <person name="Hollibaugh J.T."/>
            <person name="Xie G."/>
            <person name="Stolz J.F."/>
            <person name="Richardson P."/>
        </authorList>
    </citation>
    <scope>NUCLEOTIDE SEQUENCE [LARGE SCALE GENOMIC DNA]</scope>
    <source>
        <strain>ATCC BAA-1101 / DSM 17681 / MLHE-1</strain>
    </source>
</reference>
<evidence type="ECO:0000255" key="1">
    <source>
        <dbReference type="HAMAP-Rule" id="MF_00676"/>
    </source>
</evidence>
<keyword id="KW-1185">Reference proteome</keyword>
<protein>
    <recommendedName>
        <fullName evidence="1">UPF0260 protein Mlg_1382</fullName>
    </recommendedName>
</protein>